<keyword id="KW-0997">Cell inner membrane</keyword>
<keyword id="KW-1003">Cell membrane</keyword>
<keyword id="KW-0407">Ion channel</keyword>
<keyword id="KW-0406">Ion transport</keyword>
<keyword id="KW-0472">Membrane</keyword>
<keyword id="KW-0479">Metal-binding</keyword>
<keyword id="KW-0915">Sodium</keyword>
<keyword id="KW-0812">Transmembrane</keyword>
<keyword id="KW-1133">Transmembrane helix</keyword>
<keyword id="KW-0813">Transport</keyword>
<comment type="function">
    <text evidence="1">Fluoride-specific ion channel. Important for reducing fluoride concentration in the cell, thus reducing its toxicity.</text>
</comment>
<comment type="catalytic activity">
    <reaction evidence="1">
        <text>fluoride(in) = fluoride(out)</text>
        <dbReference type="Rhea" id="RHEA:76159"/>
        <dbReference type="ChEBI" id="CHEBI:17051"/>
    </reaction>
    <physiologicalReaction direction="left-to-right" evidence="1">
        <dbReference type="Rhea" id="RHEA:76160"/>
    </physiologicalReaction>
</comment>
<comment type="activity regulation">
    <text evidence="1">Na(+) is not transported, but it plays an essential structural role and its presence is essential for fluoride channel function.</text>
</comment>
<comment type="subcellular location">
    <subcellularLocation>
        <location evidence="1">Cell inner membrane</location>
        <topology evidence="1">Multi-pass membrane protein</topology>
    </subcellularLocation>
</comment>
<comment type="similarity">
    <text evidence="1">Belongs to the fluoride channel Fluc/FEX (TC 1.A.43) family.</text>
</comment>
<accession>Q4ZRL4</accession>
<dbReference type="EMBL" id="CP000075">
    <property type="protein sequence ID" value="AAY38208.1"/>
    <property type="molecule type" value="Genomic_DNA"/>
</dbReference>
<dbReference type="RefSeq" id="WP_011268268.1">
    <property type="nucleotide sequence ID" value="NC_007005.1"/>
</dbReference>
<dbReference type="RefSeq" id="YP_236246.1">
    <property type="nucleotide sequence ID" value="NC_007005.1"/>
</dbReference>
<dbReference type="SMR" id="Q4ZRL4"/>
<dbReference type="STRING" id="205918.Psyr_3176"/>
<dbReference type="KEGG" id="psb:Psyr_3176"/>
<dbReference type="PATRIC" id="fig|205918.7.peg.3241"/>
<dbReference type="eggNOG" id="COG0239">
    <property type="taxonomic scope" value="Bacteria"/>
</dbReference>
<dbReference type="HOGENOM" id="CLU_114342_3_0_6"/>
<dbReference type="OrthoDB" id="9806299at2"/>
<dbReference type="Proteomes" id="UP000000426">
    <property type="component" value="Chromosome"/>
</dbReference>
<dbReference type="GO" id="GO:0005886">
    <property type="term" value="C:plasma membrane"/>
    <property type="evidence" value="ECO:0007669"/>
    <property type="project" value="UniProtKB-SubCell"/>
</dbReference>
<dbReference type="GO" id="GO:0062054">
    <property type="term" value="F:fluoride channel activity"/>
    <property type="evidence" value="ECO:0007669"/>
    <property type="project" value="UniProtKB-UniRule"/>
</dbReference>
<dbReference type="GO" id="GO:0046872">
    <property type="term" value="F:metal ion binding"/>
    <property type="evidence" value="ECO:0007669"/>
    <property type="project" value="UniProtKB-KW"/>
</dbReference>
<dbReference type="GO" id="GO:0140114">
    <property type="term" value="P:cellular detoxification of fluoride"/>
    <property type="evidence" value="ECO:0007669"/>
    <property type="project" value="UniProtKB-UniRule"/>
</dbReference>
<dbReference type="HAMAP" id="MF_00454">
    <property type="entry name" value="FluC"/>
    <property type="match status" value="1"/>
</dbReference>
<dbReference type="InterPro" id="IPR003691">
    <property type="entry name" value="FluC"/>
</dbReference>
<dbReference type="NCBIfam" id="NF010830">
    <property type="entry name" value="PRK14234.1"/>
    <property type="match status" value="1"/>
</dbReference>
<dbReference type="PANTHER" id="PTHR28259">
    <property type="entry name" value="FLUORIDE EXPORT PROTEIN 1-RELATED"/>
    <property type="match status" value="1"/>
</dbReference>
<dbReference type="PANTHER" id="PTHR28259:SF1">
    <property type="entry name" value="FLUORIDE EXPORT PROTEIN 1-RELATED"/>
    <property type="match status" value="1"/>
</dbReference>
<dbReference type="Pfam" id="PF02537">
    <property type="entry name" value="CRCB"/>
    <property type="match status" value="1"/>
</dbReference>
<proteinExistence type="inferred from homology"/>
<reference key="1">
    <citation type="journal article" date="2005" name="Proc. Natl. Acad. Sci. U.S.A.">
        <title>Comparison of the complete genome sequences of Pseudomonas syringae pv. syringae B728a and pv. tomato DC3000.</title>
        <authorList>
            <person name="Feil H."/>
            <person name="Feil W.S."/>
            <person name="Chain P."/>
            <person name="Larimer F."/>
            <person name="Dibartolo G."/>
            <person name="Copeland A."/>
            <person name="Lykidis A."/>
            <person name="Trong S."/>
            <person name="Nolan M."/>
            <person name="Goltsman E."/>
            <person name="Thiel J."/>
            <person name="Malfatti S."/>
            <person name="Loper J.E."/>
            <person name="Lapidus A."/>
            <person name="Detter J.C."/>
            <person name="Land M."/>
            <person name="Richardson P.M."/>
            <person name="Kyrpides N.C."/>
            <person name="Ivanova N."/>
            <person name="Lindow S.E."/>
        </authorList>
    </citation>
    <scope>NUCLEOTIDE SEQUENCE [LARGE SCALE GENOMIC DNA]</scope>
    <source>
        <strain>B728a</strain>
    </source>
</reference>
<name>FLUC_PSEU2</name>
<organism>
    <name type="scientific">Pseudomonas syringae pv. syringae (strain B728a)</name>
    <dbReference type="NCBI Taxonomy" id="205918"/>
    <lineage>
        <taxon>Bacteria</taxon>
        <taxon>Pseudomonadati</taxon>
        <taxon>Pseudomonadota</taxon>
        <taxon>Gammaproteobacteria</taxon>
        <taxon>Pseudomonadales</taxon>
        <taxon>Pseudomonadaceae</taxon>
        <taxon>Pseudomonas</taxon>
        <taxon>Pseudomonas syringae</taxon>
    </lineage>
</organism>
<protein>
    <recommendedName>
        <fullName evidence="1">Fluoride-specific ion channel FluC</fullName>
    </recommendedName>
</protein>
<evidence type="ECO:0000255" key="1">
    <source>
        <dbReference type="HAMAP-Rule" id="MF_00454"/>
    </source>
</evidence>
<feature type="chain" id="PRO_0000252917" description="Fluoride-specific ion channel FluC">
    <location>
        <begin position="1"/>
        <end position="124"/>
    </location>
</feature>
<feature type="transmembrane region" description="Helical" evidence="1">
    <location>
        <begin position="5"/>
        <end position="25"/>
    </location>
</feature>
<feature type="transmembrane region" description="Helical" evidence="1">
    <location>
        <begin position="38"/>
        <end position="58"/>
    </location>
</feature>
<feature type="transmembrane region" description="Helical" evidence="1">
    <location>
        <begin position="69"/>
        <end position="89"/>
    </location>
</feature>
<feature type="transmembrane region" description="Helical" evidence="1">
    <location>
        <begin position="99"/>
        <end position="119"/>
    </location>
</feature>
<feature type="binding site" evidence="1">
    <location>
        <position position="76"/>
    </location>
    <ligand>
        <name>Na(+)</name>
        <dbReference type="ChEBI" id="CHEBI:29101"/>
        <note>structural</note>
    </ligand>
</feature>
<feature type="binding site" evidence="1">
    <location>
        <position position="79"/>
    </location>
    <ligand>
        <name>Na(+)</name>
        <dbReference type="ChEBI" id="CHEBI:29101"/>
        <note>structural</note>
    </ligand>
</feature>
<sequence>MIQTILAVSIAGIAGTLLRFATGTWVSANWPRYFYAATLAVNIVGCLIIGVLYGLFLLRPEVPIEIRAGLIVGFVGGLTTFSSFSLDTLRLLESGQVPLALGYAGISVFGGLLATWAGLSLTRL</sequence>
<gene>
    <name evidence="1" type="primary">fluC</name>
    <name evidence="1" type="synonym">crcB</name>
    <name type="ordered locus">Psyr_3176</name>
</gene>